<keyword id="KW-0648">Protein biosynthesis</keyword>
<keyword id="KW-0808">Transferase</keyword>
<evidence type="ECO:0000255" key="1">
    <source>
        <dbReference type="HAMAP-Rule" id="MF_00182"/>
    </source>
</evidence>
<feature type="chain" id="PRO_1000190002" description="Methionyl-tRNA formyltransferase">
    <location>
        <begin position="1"/>
        <end position="306"/>
    </location>
</feature>
<feature type="binding site" evidence="1">
    <location>
        <begin position="108"/>
        <end position="111"/>
    </location>
    <ligand>
        <name>(6S)-5,6,7,8-tetrahydrofolate</name>
        <dbReference type="ChEBI" id="CHEBI:57453"/>
    </ligand>
</feature>
<gene>
    <name evidence="1" type="primary">fmt</name>
    <name type="ordered locus">Achl_1665</name>
</gene>
<dbReference type="EC" id="2.1.2.9" evidence="1"/>
<dbReference type="EMBL" id="CP001341">
    <property type="protein sequence ID" value="ACL39652.1"/>
    <property type="molecule type" value="Genomic_DNA"/>
</dbReference>
<dbReference type="RefSeq" id="WP_015936872.1">
    <property type="nucleotide sequence ID" value="NC_011886.1"/>
</dbReference>
<dbReference type="SMR" id="B8HH63"/>
<dbReference type="STRING" id="452863.Achl_1665"/>
<dbReference type="KEGG" id="ach:Achl_1665"/>
<dbReference type="eggNOG" id="COG0223">
    <property type="taxonomic scope" value="Bacteria"/>
</dbReference>
<dbReference type="HOGENOM" id="CLU_033347_1_0_11"/>
<dbReference type="OrthoDB" id="9802815at2"/>
<dbReference type="Proteomes" id="UP000002505">
    <property type="component" value="Chromosome"/>
</dbReference>
<dbReference type="GO" id="GO:0005829">
    <property type="term" value="C:cytosol"/>
    <property type="evidence" value="ECO:0007669"/>
    <property type="project" value="TreeGrafter"/>
</dbReference>
<dbReference type="GO" id="GO:0004479">
    <property type="term" value="F:methionyl-tRNA formyltransferase activity"/>
    <property type="evidence" value="ECO:0007669"/>
    <property type="project" value="UniProtKB-UniRule"/>
</dbReference>
<dbReference type="CDD" id="cd08646">
    <property type="entry name" value="FMT_core_Met-tRNA-FMT_N"/>
    <property type="match status" value="1"/>
</dbReference>
<dbReference type="CDD" id="cd08704">
    <property type="entry name" value="Met_tRNA_FMT_C"/>
    <property type="match status" value="1"/>
</dbReference>
<dbReference type="Gene3D" id="3.40.50.12230">
    <property type="match status" value="1"/>
</dbReference>
<dbReference type="HAMAP" id="MF_00182">
    <property type="entry name" value="Formyl_trans"/>
    <property type="match status" value="1"/>
</dbReference>
<dbReference type="InterPro" id="IPR005794">
    <property type="entry name" value="Fmt"/>
</dbReference>
<dbReference type="InterPro" id="IPR005793">
    <property type="entry name" value="Formyl_trans_C"/>
</dbReference>
<dbReference type="InterPro" id="IPR002376">
    <property type="entry name" value="Formyl_transf_N"/>
</dbReference>
<dbReference type="InterPro" id="IPR036477">
    <property type="entry name" value="Formyl_transf_N_sf"/>
</dbReference>
<dbReference type="InterPro" id="IPR011034">
    <property type="entry name" value="Formyl_transferase-like_C_sf"/>
</dbReference>
<dbReference type="InterPro" id="IPR044135">
    <property type="entry name" value="Met-tRNA-FMT_C"/>
</dbReference>
<dbReference type="InterPro" id="IPR041711">
    <property type="entry name" value="Met-tRNA-FMT_N"/>
</dbReference>
<dbReference type="NCBIfam" id="TIGR00460">
    <property type="entry name" value="fmt"/>
    <property type="match status" value="1"/>
</dbReference>
<dbReference type="PANTHER" id="PTHR11138">
    <property type="entry name" value="METHIONYL-TRNA FORMYLTRANSFERASE"/>
    <property type="match status" value="1"/>
</dbReference>
<dbReference type="PANTHER" id="PTHR11138:SF5">
    <property type="entry name" value="METHIONYL-TRNA FORMYLTRANSFERASE, MITOCHONDRIAL"/>
    <property type="match status" value="1"/>
</dbReference>
<dbReference type="Pfam" id="PF02911">
    <property type="entry name" value="Formyl_trans_C"/>
    <property type="match status" value="1"/>
</dbReference>
<dbReference type="Pfam" id="PF00551">
    <property type="entry name" value="Formyl_trans_N"/>
    <property type="match status" value="1"/>
</dbReference>
<dbReference type="SUPFAM" id="SSF50486">
    <property type="entry name" value="FMT C-terminal domain-like"/>
    <property type="match status" value="1"/>
</dbReference>
<dbReference type="SUPFAM" id="SSF53328">
    <property type="entry name" value="Formyltransferase"/>
    <property type="match status" value="1"/>
</dbReference>
<accession>B8HH63</accession>
<organism>
    <name type="scientific">Pseudarthrobacter chlorophenolicus (strain ATCC 700700 / DSM 12829 / CIP 107037 / JCM 12360 / KCTC 9906 / NCIMB 13794 / A6)</name>
    <name type="common">Arthrobacter chlorophenolicus</name>
    <dbReference type="NCBI Taxonomy" id="452863"/>
    <lineage>
        <taxon>Bacteria</taxon>
        <taxon>Bacillati</taxon>
        <taxon>Actinomycetota</taxon>
        <taxon>Actinomycetes</taxon>
        <taxon>Micrococcales</taxon>
        <taxon>Micrococcaceae</taxon>
        <taxon>Pseudarthrobacter</taxon>
    </lineage>
</organism>
<protein>
    <recommendedName>
        <fullName evidence="1">Methionyl-tRNA formyltransferase</fullName>
        <ecNumber evidence="1">2.1.2.9</ecNumber>
    </recommendedName>
</protein>
<comment type="function">
    <text evidence="1">Attaches a formyl group to the free amino group of methionyl-tRNA(fMet). The formyl group appears to play a dual role in the initiator identity of N-formylmethionyl-tRNA by promoting its recognition by IF2 and preventing the misappropriation of this tRNA by the elongation apparatus.</text>
</comment>
<comment type="catalytic activity">
    <reaction evidence="1">
        <text>L-methionyl-tRNA(fMet) + (6R)-10-formyltetrahydrofolate = N-formyl-L-methionyl-tRNA(fMet) + (6S)-5,6,7,8-tetrahydrofolate + H(+)</text>
        <dbReference type="Rhea" id="RHEA:24380"/>
        <dbReference type="Rhea" id="RHEA-COMP:9952"/>
        <dbReference type="Rhea" id="RHEA-COMP:9953"/>
        <dbReference type="ChEBI" id="CHEBI:15378"/>
        <dbReference type="ChEBI" id="CHEBI:57453"/>
        <dbReference type="ChEBI" id="CHEBI:78530"/>
        <dbReference type="ChEBI" id="CHEBI:78844"/>
        <dbReference type="ChEBI" id="CHEBI:195366"/>
        <dbReference type="EC" id="2.1.2.9"/>
    </reaction>
</comment>
<comment type="similarity">
    <text evidence="1">Belongs to the Fmt family.</text>
</comment>
<reference key="1">
    <citation type="submission" date="2009-01" db="EMBL/GenBank/DDBJ databases">
        <title>Complete sequence of chromosome of Arthrobacter chlorophenolicus A6.</title>
        <authorList>
            <consortium name="US DOE Joint Genome Institute"/>
            <person name="Lucas S."/>
            <person name="Copeland A."/>
            <person name="Lapidus A."/>
            <person name="Glavina del Rio T."/>
            <person name="Tice H."/>
            <person name="Bruce D."/>
            <person name="Goodwin L."/>
            <person name="Pitluck S."/>
            <person name="Goltsman E."/>
            <person name="Clum A."/>
            <person name="Larimer F."/>
            <person name="Land M."/>
            <person name="Hauser L."/>
            <person name="Kyrpides N."/>
            <person name="Mikhailova N."/>
            <person name="Jansson J."/>
            <person name="Richardson P."/>
        </authorList>
    </citation>
    <scope>NUCLEOTIDE SEQUENCE [LARGE SCALE GENOMIC DNA]</scope>
    <source>
        <strain>ATCC 700700 / DSM 12829 / CIP 107037 / JCM 12360 / KCTC 9906 / NCIMB 13794 / A6</strain>
    </source>
</reference>
<proteinExistence type="inferred from homology"/>
<name>FMT_PSECP</name>
<sequence length="306" mass="31609">MRVLFAGTPAVAVPSLDALVEAGFDVVAVLTRPDAPIGRKRVLTPSPVAARAAELGLDVIYAAKVDDAAIEQISAAAPDVAAIVAYGGLVPPAALAIPRHGWINLHFSLLPAWRGAAPVQRSVMAGDDVTGAVTFQLEKGLDTGPVFGTLTEAVGPEDTSGQLLERLSHSGAVLLAQTLSAIETGKASAVPQAGDVSLAPKLTLEDGHLNWHHPALAIGRQARGATPEPGAWTLLDGQRVKLDPVRLRPDVEDLAPGALAFHGKSVLVGTGSHAVELTRIQPAGKKMMAAPDWARGIGSLEGVVFE</sequence>